<gene>
    <name type="ordered locus">BQ2027_MB3154C</name>
</gene>
<feature type="chain" id="PRO_0000222917" description="Putative diacyglycerol O-acyltransferase Mb3154c">
    <location>
        <begin position="1"/>
        <end position="463"/>
    </location>
</feature>
<feature type="active site" description="Proton acceptor" evidence="2">
    <location>
        <position position="137"/>
    </location>
</feature>
<accession>P0A651</accession>
<accession>A0A1R3Y384</accession>
<accession>O07035</accession>
<accession>X2BMP4</accession>
<protein>
    <recommendedName>
        <fullName>Putative diacyglycerol O-acyltransferase Mb3154c</fullName>
        <ecNumber evidence="1">2.3.1.20</ecNumber>
    </recommendedName>
    <alternativeName>
        <fullName>Putative triacylglycerol synthase Mb3154c</fullName>
    </alternativeName>
</protein>
<keyword id="KW-0012">Acyltransferase</keyword>
<keyword id="KW-0319">Glycerol metabolism</keyword>
<keyword id="KW-0444">Lipid biosynthesis</keyword>
<keyword id="KW-0443">Lipid metabolism</keyword>
<keyword id="KW-1185">Reference proteome</keyword>
<keyword id="KW-0808">Transferase</keyword>
<organism>
    <name type="scientific">Mycobacterium bovis (strain ATCC BAA-935 / AF2122/97)</name>
    <dbReference type="NCBI Taxonomy" id="233413"/>
    <lineage>
        <taxon>Bacteria</taxon>
        <taxon>Bacillati</taxon>
        <taxon>Actinomycetota</taxon>
        <taxon>Actinomycetes</taxon>
        <taxon>Mycobacteriales</taxon>
        <taxon>Mycobacteriaceae</taxon>
        <taxon>Mycobacterium</taxon>
        <taxon>Mycobacterium tuberculosis complex</taxon>
    </lineage>
</organism>
<name>Y3154_MYCBO</name>
<comment type="catalytic activity">
    <reaction evidence="1">
        <text>an acyl-CoA + a 1,2-diacyl-sn-glycerol = a triacyl-sn-glycerol + CoA</text>
        <dbReference type="Rhea" id="RHEA:10868"/>
        <dbReference type="ChEBI" id="CHEBI:17815"/>
        <dbReference type="ChEBI" id="CHEBI:57287"/>
        <dbReference type="ChEBI" id="CHEBI:58342"/>
        <dbReference type="ChEBI" id="CHEBI:64615"/>
        <dbReference type="EC" id="2.3.1.20"/>
    </reaction>
</comment>
<comment type="pathway">
    <text>Glycerolipid metabolism; triacylglycerol biosynthesis.</text>
</comment>
<comment type="similarity">
    <text evidence="3">Belongs to the long-chain O-acyltransferase family.</text>
</comment>
<evidence type="ECO:0000250" key="1">
    <source>
        <dbReference type="UniProtKB" id="P9WKC9"/>
    </source>
</evidence>
<evidence type="ECO:0000255" key="2"/>
<evidence type="ECO:0000305" key="3"/>
<dbReference type="EC" id="2.3.1.20" evidence="1"/>
<dbReference type="EMBL" id="LT708304">
    <property type="protein sequence ID" value="SIU01780.1"/>
    <property type="molecule type" value="Genomic_DNA"/>
</dbReference>
<dbReference type="RefSeq" id="NP_856799.1">
    <property type="nucleotide sequence ID" value="NC_002945.3"/>
</dbReference>
<dbReference type="SMR" id="P0A651"/>
<dbReference type="KEGG" id="mbo:BQ2027_MB3154C"/>
<dbReference type="PATRIC" id="fig|233413.5.peg.3469"/>
<dbReference type="UniPathway" id="UPA00282"/>
<dbReference type="Proteomes" id="UP000001419">
    <property type="component" value="Chromosome"/>
</dbReference>
<dbReference type="GO" id="GO:0005886">
    <property type="term" value="C:plasma membrane"/>
    <property type="evidence" value="ECO:0007669"/>
    <property type="project" value="TreeGrafter"/>
</dbReference>
<dbReference type="GO" id="GO:0004144">
    <property type="term" value="F:diacylglycerol O-acyltransferase activity"/>
    <property type="evidence" value="ECO:0007669"/>
    <property type="project" value="UniProtKB-EC"/>
</dbReference>
<dbReference type="GO" id="GO:0051701">
    <property type="term" value="P:biological process involved in interaction with host"/>
    <property type="evidence" value="ECO:0007669"/>
    <property type="project" value="TreeGrafter"/>
</dbReference>
<dbReference type="GO" id="GO:0006071">
    <property type="term" value="P:glycerol metabolic process"/>
    <property type="evidence" value="ECO:0007669"/>
    <property type="project" value="UniProtKB-KW"/>
</dbReference>
<dbReference type="GO" id="GO:0001666">
    <property type="term" value="P:response to hypoxia"/>
    <property type="evidence" value="ECO:0007669"/>
    <property type="project" value="TreeGrafter"/>
</dbReference>
<dbReference type="GO" id="GO:0071731">
    <property type="term" value="P:response to nitric oxide"/>
    <property type="evidence" value="ECO:0007669"/>
    <property type="project" value="TreeGrafter"/>
</dbReference>
<dbReference type="GO" id="GO:0019432">
    <property type="term" value="P:triglyceride biosynthetic process"/>
    <property type="evidence" value="ECO:0007669"/>
    <property type="project" value="UniProtKB-UniPathway"/>
</dbReference>
<dbReference type="InterPro" id="IPR014292">
    <property type="entry name" value="Acyl_transf_WS/DGAT"/>
</dbReference>
<dbReference type="InterPro" id="IPR045034">
    <property type="entry name" value="O-acyltransferase_WSD1-like"/>
</dbReference>
<dbReference type="InterPro" id="IPR009721">
    <property type="entry name" value="O-acyltransferase_WSD1_C"/>
</dbReference>
<dbReference type="InterPro" id="IPR004255">
    <property type="entry name" value="O-acyltransferase_WSD1_N"/>
</dbReference>
<dbReference type="NCBIfam" id="TIGR02946">
    <property type="entry name" value="acyl_WS_DGAT"/>
    <property type="match status" value="1"/>
</dbReference>
<dbReference type="PANTHER" id="PTHR31650">
    <property type="entry name" value="O-ACYLTRANSFERASE (WSD1-LIKE) FAMILY PROTEIN"/>
    <property type="match status" value="1"/>
</dbReference>
<dbReference type="PANTHER" id="PTHR31650:SF1">
    <property type="entry name" value="WAX ESTER SYNTHASE_DIACYLGLYCEROL ACYLTRANSFERASE 4-RELATED"/>
    <property type="match status" value="1"/>
</dbReference>
<dbReference type="Pfam" id="PF06974">
    <property type="entry name" value="WS_DGAT_C"/>
    <property type="match status" value="1"/>
</dbReference>
<dbReference type="Pfam" id="PF03007">
    <property type="entry name" value="WS_DGAT_cat"/>
    <property type="match status" value="1"/>
</dbReference>
<dbReference type="SUPFAM" id="SSF52777">
    <property type="entry name" value="CoA-dependent acyltransferases"/>
    <property type="match status" value="1"/>
</dbReference>
<sequence length="463" mass="50721">MNHLTTLDAGFLKAEDVDRHVSLAIGALAVIEGPAPDQEAFLSSLAQRLRPCTRFGQRLRLRPFDLGAPKWVDDPDFDLGRHVWRIALPRPGNEDQLFELIADLMARRLDRGRPLWEVWVIEGLADSKWAILTKLHHCMADGIAATHLLAGLSDESMSDSFASNIHTTMQSQSASVRRGGFRVNPSEALTASTAVMAGIVRAAKGASEIAAGVLSPAASSLNGPISDLRRYSAAKVPLADVEQVCRKFDVTINDVALAAITESYRNVLIQRGERPRFDSLRTLVPVSTRSNSALSKTDNRVSLMLPNLPVDQENPLQRLRIVHSRLTRAKAGGQRQFGNTLMAIANRLPFPMTAWAVGLLMRLPQRGVVTVATNVPGPRRPLQIMGRRVLDLYPVSPIAMQLRTSVAMLSYADDLYFGILADYDVVADAGQLARGIEDAVARLVAISKRRKVTRRRGALSLVV</sequence>
<reference key="1">
    <citation type="journal article" date="2003" name="Proc. Natl. Acad. Sci. U.S.A.">
        <title>The complete genome sequence of Mycobacterium bovis.</title>
        <authorList>
            <person name="Garnier T."/>
            <person name="Eiglmeier K."/>
            <person name="Camus J.-C."/>
            <person name="Medina N."/>
            <person name="Mansoor H."/>
            <person name="Pryor M."/>
            <person name="Duthoy S."/>
            <person name="Grondin S."/>
            <person name="Lacroix C."/>
            <person name="Monsempe C."/>
            <person name="Simon S."/>
            <person name="Harris B."/>
            <person name="Atkin R."/>
            <person name="Doggett J."/>
            <person name="Mayes R."/>
            <person name="Keating L."/>
            <person name="Wheeler P.R."/>
            <person name="Parkhill J."/>
            <person name="Barrell B.G."/>
            <person name="Cole S.T."/>
            <person name="Gordon S.V."/>
            <person name="Hewinson R.G."/>
        </authorList>
    </citation>
    <scope>NUCLEOTIDE SEQUENCE [LARGE SCALE GENOMIC DNA]</scope>
    <source>
        <strain>ATCC BAA-935 / AF2122/97</strain>
    </source>
</reference>
<reference key="2">
    <citation type="journal article" date="2017" name="Genome Announc.">
        <title>Updated reference genome sequence and annotation of Mycobacterium bovis AF2122/97.</title>
        <authorList>
            <person name="Malone K.M."/>
            <person name="Farrell D."/>
            <person name="Stuber T.P."/>
            <person name="Schubert O.T."/>
            <person name="Aebersold R."/>
            <person name="Robbe-Austerman S."/>
            <person name="Gordon S.V."/>
        </authorList>
    </citation>
    <scope>NUCLEOTIDE SEQUENCE [LARGE SCALE GENOMIC DNA]</scope>
    <scope>GENOME REANNOTATION</scope>
    <source>
        <strain>ATCC BAA-935 / AF2122/97</strain>
    </source>
</reference>
<proteinExistence type="inferred from homology"/>